<accession>P05546</accession>
<accession>A0A7H0TJC6</accession>
<accession>B2RAI1</accession>
<accession>D3DX34</accession>
<accession>Q6IBZ5</accession>
<dbReference type="EMBL" id="M12849">
    <property type="protein sequence ID" value="AAA52642.1"/>
    <property type="molecule type" value="mRNA"/>
</dbReference>
<dbReference type="EMBL" id="MT158476">
    <property type="protein sequence ID" value="QNR01115.1"/>
    <property type="molecule type" value="mRNA"/>
</dbReference>
<dbReference type="EMBL" id="M58600">
    <property type="protein sequence ID" value="AAA52641.1"/>
    <property type="molecule type" value="Genomic_DNA"/>
</dbReference>
<dbReference type="EMBL" id="CR456573">
    <property type="protein sequence ID" value="CAG30459.1"/>
    <property type="status" value="ALT_INIT"/>
    <property type="molecule type" value="mRNA"/>
</dbReference>
<dbReference type="EMBL" id="AK314200">
    <property type="protein sequence ID" value="BAG36878.1"/>
    <property type="molecule type" value="mRNA"/>
</dbReference>
<dbReference type="EMBL" id="CH471176">
    <property type="protein sequence ID" value="EAX02941.1"/>
    <property type="molecule type" value="Genomic_DNA"/>
</dbReference>
<dbReference type="EMBL" id="CH471176">
    <property type="protein sequence ID" value="EAX02942.1"/>
    <property type="molecule type" value="Genomic_DNA"/>
</dbReference>
<dbReference type="EMBL" id="X03498">
    <property type="protein sequence ID" value="CAA27218.1"/>
    <property type="molecule type" value="mRNA"/>
</dbReference>
<dbReference type="EMBL" id="M33660">
    <property type="protein sequence ID" value="AAA36185.1"/>
    <property type="molecule type" value="Genomic_DNA"/>
</dbReference>
<dbReference type="CCDS" id="CCDS13783.1">
    <molecule id="P05546-1"/>
</dbReference>
<dbReference type="PIR" id="A37924">
    <property type="entry name" value="A37924"/>
</dbReference>
<dbReference type="RefSeq" id="NP_000176.2">
    <molecule id="P05546-1"/>
    <property type="nucleotide sequence ID" value="NM_000185.4"/>
</dbReference>
<dbReference type="PDB" id="1JMJ">
    <property type="method" value="X-ray"/>
    <property type="resolution" value="2.35 A"/>
    <property type="chains" value="A/B=20-499"/>
</dbReference>
<dbReference type="PDB" id="1JMO">
    <property type="method" value="X-ray"/>
    <property type="resolution" value="2.20 A"/>
    <property type="chains" value="A=20-499"/>
</dbReference>
<dbReference type="PDB" id="2NAT">
    <property type="method" value="NMR"/>
    <property type="chains" value="A=192-219"/>
</dbReference>
<dbReference type="PDB" id="2NCU">
    <property type="method" value="NMR"/>
    <property type="chains" value="A=192-212"/>
</dbReference>
<dbReference type="PDB" id="2NCV">
    <property type="method" value="NMR"/>
    <property type="chains" value="A=192-212"/>
</dbReference>
<dbReference type="PDB" id="2NCW">
    <property type="method" value="NMR"/>
    <property type="chains" value="A=189-212"/>
</dbReference>
<dbReference type="PDB" id="6J12">
    <property type="method" value="NMR"/>
    <property type="chains" value="A=192-219"/>
</dbReference>
<dbReference type="PDB" id="6KBO">
    <property type="method" value="NMR"/>
    <property type="chains" value="B=192-219"/>
</dbReference>
<dbReference type="PDB" id="6KBV">
    <property type="method" value="NMR"/>
    <property type="chains" value="B=192-219"/>
</dbReference>
<dbReference type="PDBsum" id="1JMJ"/>
<dbReference type="PDBsum" id="1JMO"/>
<dbReference type="PDBsum" id="2NAT"/>
<dbReference type="PDBsum" id="2NCU"/>
<dbReference type="PDBsum" id="2NCV"/>
<dbReference type="PDBsum" id="2NCW"/>
<dbReference type="PDBsum" id="6J12"/>
<dbReference type="PDBsum" id="6KBO"/>
<dbReference type="PDBsum" id="6KBV"/>
<dbReference type="SMR" id="P05546"/>
<dbReference type="BioGRID" id="109303">
    <property type="interactions" value="15"/>
</dbReference>
<dbReference type="CORUM" id="P05546"/>
<dbReference type="FunCoup" id="P05546">
    <property type="interactions" value="290"/>
</dbReference>
<dbReference type="IntAct" id="P05546">
    <property type="interactions" value="14"/>
</dbReference>
<dbReference type="MINT" id="P05546"/>
<dbReference type="STRING" id="9606.ENSP00000215727"/>
<dbReference type="DrugBank" id="DB00407">
    <property type="generic name" value="Ardeparin"/>
</dbReference>
<dbReference type="DrugBank" id="DB09258">
    <property type="generic name" value="Bemiparin"/>
</dbReference>
<dbReference type="DrugBank" id="DB09130">
    <property type="generic name" value="Copper"/>
</dbReference>
<dbReference type="DrugBank" id="DB06271">
    <property type="generic name" value="Sulodexide"/>
</dbReference>
<dbReference type="DrugBank" id="DB01593">
    <property type="generic name" value="Zinc"/>
</dbReference>
<dbReference type="DrugBank" id="DB14487">
    <property type="generic name" value="Zinc acetate"/>
</dbReference>
<dbReference type="DrugBank" id="DB14533">
    <property type="generic name" value="Zinc chloride"/>
</dbReference>
<dbReference type="DrugBank" id="DB14548">
    <property type="generic name" value="Zinc sulfate, unspecified form"/>
</dbReference>
<dbReference type="MEROPS" id="I04.019"/>
<dbReference type="GlyConnect" id="695">
    <property type="glycosylation" value="18 N-Linked glycans (2 sites)"/>
</dbReference>
<dbReference type="GlyCosmos" id="P05546">
    <property type="glycosylation" value="11 sites, 26 glycans"/>
</dbReference>
<dbReference type="GlyGen" id="P05546">
    <property type="glycosylation" value="14 sites, 61 N-linked glycans (2 sites), 5 O-linked glycans (11 sites)"/>
</dbReference>
<dbReference type="iPTMnet" id="P05546"/>
<dbReference type="PhosphoSitePlus" id="P05546"/>
<dbReference type="BioMuta" id="SERPIND1"/>
<dbReference type="DMDM" id="123055"/>
<dbReference type="CPTAC" id="CPTAC-1508"/>
<dbReference type="CPTAC" id="non-CPTAC-1132"/>
<dbReference type="jPOST" id="P05546"/>
<dbReference type="MassIVE" id="P05546"/>
<dbReference type="PaxDb" id="9606-ENSP00000215727"/>
<dbReference type="PeptideAtlas" id="P05546"/>
<dbReference type="ProteomicsDB" id="51846"/>
<dbReference type="Antibodypedia" id="3265">
    <property type="antibodies" value="334 antibodies from 34 providers"/>
</dbReference>
<dbReference type="DNASU" id="3053"/>
<dbReference type="Ensembl" id="ENST00000215727.10">
    <molecule id="P05546-1"/>
    <property type="protein sequence ID" value="ENSP00000215727.5"/>
    <property type="gene ID" value="ENSG00000099937.11"/>
</dbReference>
<dbReference type="Ensembl" id="ENST00000406799.1">
    <molecule id="P05546-1"/>
    <property type="protein sequence ID" value="ENSP00000384050.1"/>
    <property type="gene ID" value="ENSG00000099937.11"/>
</dbReference>
<dbReference type="GeneID" id="3053"/>
<dbReference type="KEGG" id="hsa:3053"/>
<dbReference type="MANE-Select" id="ENST00000215727.10">
    <property type="protein sequence ID" value="ENSP00000215727.5"/>
    <property type="RefSeq nucleotide sequence ID" value="NM_000185.4"/>
    <property type="RefSeq protein sequence ID" value="NP_000176.2"/>
</dbReference>
<dbReference type="UCSC" id="uc002ztb.2">
    <molecule id="P05546-1"/>
    <property type="organism name" value="human"/>
</dbReference>
<dbReference type="AGR" id="HGNC:4838"/>
<dbReference type="CTD" id="3053"/>
<dbReference type="DisGeNET" id="3053"/>
<dbReference type="GeneCards" id="SERPIND1"/>
<dbReference type="HGNC" id="HGNC:4838">
    <property type="gene designation" value="SERPIND1"/>
</dbReference>
<dbReference type="HPA" id="ENSG00000099937">
    <property type="expression patterns" value="Tissue enriched (liver)"/>
</dbReference>
<dbReference type="MalaCards" id="SERPIND1"/>
<dbReference type="MIM" id="142360">
    <property type="type" value="gene"/>
</dbReference>
<dbReference type="MIM" id="612356">
    <property type="type" value="phenotype"/>
</dbReference>
<dbReference type="neXtProt" id="NX_P05546"/>
<dbReference type="OpenTargets" id="ENSG00000099937"/>
<dbReference type="PharmGKB" id="PA35053"/>
<dbReference type="VEuPathDB" id="HostDB:ENSG00000099937"/>
<dbReference type="eggNOG" id="KOG2392">
    <property type="taxonomic scope" value="Eukaryota"/>
</dbReference>
<dbReference type="GeneTree" id="ENSGT00940000158664"/>
<dbReference type="HOGENOM" id="CLU_023330_8_0_1"/>
<dbReference type="InParanoid" id="P05546"/>
<dbReference type="OMA" id="NYNLVEP"/>
<dbReference type="OrthoDB" id="1063785at2759"/>
<dbReference type="PAN-GO" id="P05546">
    <property type="GO annotations" value="3 GO annotations based on evolutionary models"/>
</dbReference>
<dbReference type="PhylomeDB" id="P05546"/>
<dbReference type="TreeFam" id="TF343094"/>
<dbReference type="PathwayCommons" id="P05546"/>
<dbReference type="Reactome" id="R-HSA-140837">
    <property type="pathway name" value="Intrinsic Pathway of Fibrin Clot Formation"/>
</dbReference>
<dbReference type="Reactome" id="R-HSA-140875">
    <property type="pathway name" value="Common Pathway of Fibrin Clot Formation"/>
</dbReference>
<dbReference type="Reactome" id="R-HSA-381426">
    <property type="pathway name" value="Regulation of Insulin-like Growth Factor (IGF) transport and uptake by Insulin-like Growth Factor Binding Proteins (IGFBPs)"/>
</dbReference>
<dbReference type="Reactome" id="R-HSA-8957275">
    <property type="pathway name" value="Post-translational protein phosphorylation"/>
</dbReference>
<dbReference type="SignaLink" id="P05546"/>
<dbReference type="SIGNOR" id="P05546"/>
<dbReference type="BioGRID-ORCS" id="3053">
    <property type="hits" value="23 hits in 1158 CRISPR screens"/>
</dbReference>
<dbReference type="EvolutionaryTrace" id="P05546"/>
<dbReference type="GeneWiki" id="Heparin_cofactor_II"/>
<dbReference type="GenomeRNAi" id="3053"/>
<dbReference type="Pharos" id="P05546">
    <property type="development level" value="Tbio"/>
</dbReference>
<dbReference type="PRO" id="PR:P05546"/>
<dbReference type="Proteomes" id="UP000005640">
    <property type="component" value="Chromosome 22"/>
</dbReference>
<dbReference type="RNAct" id="P05546">
    <property type="molecule type" value="protein"/>
</dbReference>
<dbReference type="Bgee" id="ENSG00000099937">
    <property type="expression patterns" value="Expressed in liver and 92 other cell types or tissues"/>
</dbReference>
<dbReference type="GO" id="GO:0005788">
    <property type="term" value="C:endoplasmic reticulum lumen"/>
    <property type="evidence" value="ECO:0000304"/>
    <property type="project" value="Reactome"/>
</dbReference>
<dbReference type="GO" id="GO:0070062">
    <property type="term" value="C:extracellular exosome"/>
    <property type="evidence" value="ECO:0007005"/>
    <property type="project" value="UniProtKB"/>
</dbReference>
<dbReference type="GO" id="GO:0005576">
    <property type="term" value="C:extracellular region"/>
    <property type="evidence" value="ECO:0007005"/>
    <property type="project" value="BHF-UCL"/>
</dbReference>
<dbReference type="GO" id="GO:0005615">
    <property type="term" value="C:extracellular space"/>
    <property type="evidence" value="ECO:0000318"/>
    <property type="project" value="GO_Central"/>
</dbReference>
<dbReference type="GO" id="GO:0004866">
    <property type="term" value="F:endopeptidase inhibitor activity"/>
    <property type="evidence" value="ECO:0000304"/>
    <property type="project" value="ProtInc"/>
</dbReference>
<dbReference type="GO" id="GO:0008201">
    <property type="term" value="F:heparin binding"/>
    <property type="evidence" value="ECO:0007669"/>
    <property type="project" value="UniProtKB-KW"/>
</dbReference>
<dbReference type="GO" id="GO:0004867">
    <property type="term" value="F:serine-type endopeptidase inhibitor activity"/>
    <property type="evidence" value="ECO:0000318"/>
    <property type="project" value="GO_Central"/>
</dbReference>
<dbReference type="GO" id="GO:0007596">
    <property type="term" value="P:blood coagulation"/>
    <property type="evidence" value="ECO:0007669"/>
    <property type="project" value="UniProtKB-KW"/>
</dbReference>
<dbReference type="GO" id="GO:0006935">
    <property type="term" value="P:chemotaxis"/>
    <property type="evidence" value="ECO:0007669"/>
    <property type="project" value="UniProtKB-KW"/>
</dbReference>
<dbReference type="CDD" id="cd02047">
    <property type="entry name" value="serpinD1_HCF2"/>
    <property type="match status" value="1"/>
</dbReference>
<dbReference type="FunFam" id="2.30.39.10:FF:000002">
    <property type="entry name" value="Serpin family D member 1"/>
    <property type="match status" value="1"/>
</dbReference>
<dbReference type="Gene3D" id="2.30.39.10">
    <property type="entry name" value="Alpha-1-antitrypsin, domain 1"/>
    <property type="match status" value="1"/>
</dbReference>
<dbReference type="Gene3D" id="3.30.497.10">
    <property type="entry name" value="Antithrombin, subunit I, domain 2"/>
    <property type="match status" value="1"/>
</dbReference>
<dbReference type="InterPro" id="IPR033831">
    <property type="entry name" value="HCII_serpin_dom"/>
</dbReference>
<dbReference type="InterPro" id="IPR023795">
    <property type="entry name" value="Serpin_CS"/>
</dbReference>
<dbReference type="InterPro" id="IPR023796">
    <property type="entry name" value="Serpin_dom"/>
</dbReference>
<dbReference type="InterPro" id="IPR000215">
    <property type="entry name" value="Serpin_fam"/>
</dbReference>
<dbReference type="InterPro" id="IPR036186">
    <property type="entry name" value="Serpin_sf"/>
</dbReference>
<dbReference type="InterPro" id="IPR042178">
    <property type="entry name" value="Serpin_sf_1"/>
</dbReference>
<dbReference type="InterPro" id="IPR042185">
    <property type="entry name" value="Serpin_sf_2"/>
</dbReference>
<dbReference type="PANTHER" id="PTHR11461:SF30">
    <property type="entry name" value="HEPARIN COFACTOR 2"/>
    <property type="match status" value="1"/>
</dbReference>
<dbReference type="PANTHER" id="PTHR11461">
    <property type="entry name" value="SERINE PROTEASE INHIBITOR, SERPIN"/>
    <property type="match status" value="1"/>
</dbReference>
<dbReference type="Pfam" id="PF00079">
    <property type="entry name" value="Serpin"/>
    <property type="match status" value="1"/>
</dbReference>
<dbReference type="PRINTS" id="PR00780">
    <property type="entry name" value="LEUSERPINII"/>
</dbReference>
<dbReference type="SMART" id="SM00093">
    <property type="entry name" value="SERPIN"/>
    <property type="match status" value="1"/>
</dbReference>
<dbReference type="SUPFAM" id="SSF56574">
    <property type="entry name" value="Serpins"/>
    <property type="match status" value="1"/>
</dbReference>
<dbReference type="PROSITE" id="PS00284">
    <property type="entry name" value="SERPIN"/>
    <property type="match status" value="1"/>
</dbReference>
<organism>
    <name type="scientific">Homo sapiens</name>
    <name type="common">Human</name>
    <dbReference type="NCBI Taxonomy" id="9606"/>
    <lineage>
        <taxon>Eukaryota</taxon>
        <taxon>Metazoa</taxon>
        <taxon>Chordata</taxon>
        <taxon>Craniata</taxon>
        <taxon>Vertebrata</taxon>
        <taxon>Euteleostomi</taxon>
        <taxon>Mammalia</taxon>
        <taxon>Eutheria</taxon>
        <taxon>Euarchontoglires</taxon>
        <taxon>Primates</taxon>
        <taxon>Haplorrhini</taxon>
        <taxon>Catarrhini</taxon>
        <taxon>Hominidae</taxon>
        <taxon>Homo</taxon>
    </lineage>
</organism>
<evidence type="ECO:0000250" key="1"/>
<evidence type="ECO:0000269" key="2">
    <source>
    </source>
</evidence>
<evidence type="ECO:0000269" key="3">
    <source>
    </source>
</evidence>
<evidence type="ECO:0000269" key="4">
    <source>
    </source>
</evidence>
<evidence type="ECO:0000269" key="5">
    <source>
    </source>
</evidence>
<evidence type="ECO:0000269" key="6">
    <source>
    </source>
</evidence>
<evidence type="ECO:0000269" key="7">
    <source>
    </source>
</evidence>
<evidence type="ECO:0000269" key="8">
    <source>
    </source>
</evidence>
<evidence type="ECO:0000269" key="9">
    <source>
    </source>
</evidence>
<evidence type="ECO:0000269" key="10">
    <source>
    </source>
</evidence>
<evidence type="ECO:0000269" key="11">
    <source>
    </source>
</evidence>
<evidence type="ECO:0000269" key="12">
    <source>
    </source>
</evidence>
<evidence type="ECO:0000269" key="13">
    <source>
    </source>
</evidence>
<evidence type="ECO:0000269" key="14">
    <source>
    </source>
</evidence>
<evidence type="ECO:0000303" key="15">
    <source>
    </source>
</evidence>
<evidence type="ECO:0000305" key="16"/>
<evidence type="ECO:0007829" key="17">
    <source>
        <dbReference type="PDB" id="1JMJ"/>
    </source>
</evidence>
<evidence type="ECO:0007829" key="18">
    <source>
        <dbReference type="PDB" id="1JMO"/>
    </source>
</evidence>
<evidence type="ECO:0007829" key="19">
    <source>
        <dbReference type="PDB" id="2NCW"/>
    </source>
</evidence>
<proteinExistence type="evidence at protein level"/>
<name>HEP2_HUMAN</name>
<reference key="1">
    <citation type="journal article" date="1988" name="Biochemistry">
        <title>Heparin cofactor II: cDNA sequence, chromosome localization, restriction fragment length polymorphism, and expression in Escherichia coli.</title>
        <authorList>
            <person name="Blinder M.A."/>
            <person name="Marasa J.C."/>
            <person name="Reynolds C.H."/>
            <person name="Deaven L.L."/>
            <person name="Tollefsen D.M."/>
        </authorList>
    </citation>
    <scope>NUCLEOTIDE SEQUENCE [MRNA]</scope>
</reference>
<reference evidence="16" key="2">
    <citation type="journal article" date="2020" name="IUBMB Life">
        <title>Identification and characterization of a novel isoform of heparin cofactor II in human liver.</title>
        <authorList>
            <person name="Bano S."/>
            <person name="Fatima S."/>
            <person name="Ahamad S."/>
            <person name="Ansari S."/>
            <person name="Gupta D."/>
            <person name="Tabish M."/>
            <person name="Rehman S.U."/>
            <person name="Jairajpuri M.A."/>
        </authorList>
    </citation>
    <scope>NUCLEOTIDE SEQUENCE [MRNA] (ISOFORM 2)</scope>
    <scope>FUNCTION (ISOFORM 2)</scope>
    <scope>TISSUE SPECIFICITY (ISOFORM 2)</scope>
</reference>
<reference key="3">
    <citation type="journal article" date="1991" name="Biochemistry">
        <title>Complete nucleotide sequence of the gene for human heparin cofactor II and mapping to chromosomal band 22q11.</title>
        <authorList>
            <person name="Herzog R."/>
            <person name="Lutz S."/>
            <person name="Blin N."/>
            <person name="Marasa J.C."/>
            <person name="Blinder M.A."/>
            <person name="Tollefsen D.M."/>
        </authorList>
    </citation>
    <scope>NUCLEOTIDE SEQUENCE [GENOMIC DNA]</scope>
</reference>
<reference key="4">
    <citation type="journal article" date="2004" name="Genome Biol.">
        <title>A genome annotation-driven approach to cloning the human ORFeome.</title>
        <authorList>
            <person name="Collins J.E."/>
            <person name="Wright C.L."/>
            <person name="Edwards C.A."/>
            <person name="Davis M.P."/>
            <person name="Grinham J.A."/>
            <person name="Cole C.G."/>
            <person name="Goward M.E."/>
            <person name="Aguado B."/>
            <person name="Mallya M."/>
            <person name="Mokrab Y."/>
            <person name="Huckle E.J."/>
            <person name="Beare D.M."/>
            <person name="Dunham I."/>
        </authorList>
    </citation>
    <scope>NUCLEOTIDE SEQUENCE [LARGE SCALE MRNA]</scope>
</reference>
<reference key="5">
    <citation type="journal article" date="2004" name="Nat. Genet.">
        <title>Complete sequencing and characterization of 21,243 full-length human cDNAs.</title>
        <authorList>
            <person name="Ota T."/>
            <person name="Suzuki Y."/>
            <person name="Nishikawa T."/>
            <person name="Otsuki T."/>
            <person name="Sugiyama T."/>
            <person name="Irie R."/>
            <person name="Wakamatsu A."/>
            <person name="Hayashi K."/>
            <person name="Sato H."/>
            <person name="Nagai K."/>
            <person name="Kimura K."/>
            <person name="Makita H."/>
            <person name="Sekine M."/>
            <person name="Obayashi M."/>
            <person name="Nishi T."/>
            <person name="Shibahara T."/>
            <person name="Tanaka T."/>
            <person name="Ishii S."/>
            <person name="Yamamoto J."/>
            <person name="Saito K."/>
            <person name="Kawai Y."/>
            <person name="Isono Y."/>
            <person name="Nakamura Y."/>
            <person name="Nagahari K."/>
            <person name="Murakami K."/>
            <person name="Yasuda T."/>
            <person name="Iwayanagi T."/>
            <person name="Wagatsuma M."/>
            <person name="Shiratori A."/>
            <person name="Sudo H."/>
            <person name="Hosoiri T."/>
            <person name="Kaku Y."/>
            <person name="Kodaira H."/>
            <person name="Kondo H."/>
            <person name="Sugawara M."/>
            <person name="Takahashi M."/>
            <person name="Kanda K."/>
            <person name="Yokoi T."/>
            <person name="Furuya T."/>
            <person name="Kikkawa E."/>
            <person name="Omura Y."/>
            <person name="Abe K."/>
            <person name="Kamihara K."/>
            <person name="Katsuta N."/>
            <person name="Sato K."/>
            <person name="Tanikawa M."/>
            <person name="Yamazaki M."/>
            <person name="Ninomiya K."/>
            <person name="Ishibashi T."/>
            <person name="Yamashita H."/>
            <person name="Murakawa K."/>
            <person name="Fujimori K."/>
            <person name="Tanai H."/>
            <person name="Kimata M."/>
            <person name="Watanabe M."/>
            <person name="Hiraoka S."/>
            <person name="Chiba Y."/>
            <person name="Ishida S."/>
            <person name="Ono Y."/>
            <person name="Takiguchi S."/>
            <person name="Watanabe S."/>
            <person name="Yosida M."/>
            <person name="Hotuta T."/>
            <person name="Kusano J."/>
            <person name="Kanehori K."/>
            <person name="Takahashi-Fujii A."/>
            <person name="Hara H."/>
            <person name="Tanase T.-O."/>
            <person name="Nomura Y."/>
            <person name="Togiya S."/>
            <person name="Komai F."/>
            <person name="Hara R."/>
            <person name="Takeuchi K."/>
            <person name="Arita M."/>
            <person name="Imose N."/>
            <person name="Musashino K."/>
            <person name="Yuuki H."/>
            <person name="Oshima A."/>
            <person name="Sasaki N."/>
            <person name="Aotsuka S."/>
            <person name="Yoshikawa Y."/>
            <person name="Matsunawa H."/>
            <person name="Ichihara T."/>
            <person name="Shiohata N."/>
            <person name="Sano S."/>
            <person name="Moriya S."/>
            <person name="Momiyama H."/>
            <person name="Satoh N."/>
            <person name="Takami S."/>
            <person name="Terashima Y."/>
            <person name="Suzuki O."/>
            <person name="Nakagawa S."/>
            <person name="Senoh A."/>
            <person name="Mizoguchi H."/>
            <person name="Goto Y."/>
            <person name="Shimizu F."/>
            <person name="Wakebe H."/>
            <person name="Hishigaki H."/>
            <person name="Watanabe T."/>
            <person name="Sugiyama A."/>
            <person name="Takemoto M."/>
            <person name="Kawakami B."/>
            <person name="Yamazaki M."/>
            <person name="Watanabe K."/>
            <person name="Kumagai A."/>
            <person name="Itakura S."/>
            <person name="Fukuzumi Y."/>
            <person name="Fujimori Y."/>
            <person name="Komiyama M."/>
            <person name="Tashiro H."/>
            <person name="Tanigami A."/>
            <person name="Fujiwara T."/>
            <person name="Ono T."/>
            <person name="Yamada K."/>
            <person name="Fujii Y."/>
            <person name="Ozaki K."/>
            <person name="Hirao M."/>
            <person name="Ohmori Y."/>
            <person name="Kawabata A."/>
            <person name="Hikiji T."/>
            <person name="Kobatake N."/>
            <person name="Inagaki H."/>
            <person name="Ikema Y."/>
            <person name="Okamoto S."/>
            <person name="Okitani R."/>
            <person name="Kawakami T."/>
            <person name="Noguchi S."/>
            <person name="Itoh T."/>
            <person name="Shigeta K."/>
            <person name="Senba T."/>
            <person name="Matsumura K."/>
            <person name="Nakajima Y."/>
            <person name="Mizuno T."/>
            <person name="Morinaga M."/>
            <person name="Sasaki M."/>
            <person name="Togashi T."/>
            <person name="Oyama M."/>
            <person name="Hata H."/>
            <person name="Watanabe M."/>
            <person name="Komatsu T."/>
            <person name="Mizushima-Sugano J."/>
            <person name="Satoh T."/>
            <person name="Shirai Y."/>
            <person name="Takahashi Y."/>
            <person name="Nakagawa K."/>
            <person name="Okumura K."/>
            <person name="Nagase T."/>
            <person name="Nomura N."/>
            <person name="Kikuchi H."/>
            <person name="Masuho Y."/>
            <person name="Yamashita R."/>
            <person name="Nakai K."/>
            <person name="Yada T."/>
            <person name="Nakamura Y."/>
            <person name="Ohara O."/>
            <person name="Isogai T."/>
            <person name="Sugano S."/>
        </authorList>
    </citation>
    <scope>NUCLEOTIDE SEQUENCE [LARGE SCALE MRNA]</scope>
    <source>
        <tissue>Liver</tissue>
    </source>
</reference>
<reference key="6">
    <citation type="submission" date="2005-09" db="EMBL/GenBank/DDBJ databases">
        <authorList>
            <person name="Mural R.J."/>
            <person name="Istrail S."/>
            <person name="Sutton G.G."/>
            <person name="Florea L."/>
            <person name="Halpern A.L."/>
            <person name="Mobarry C.M."/>
            <person name="Lippert R."/>
            <person name="Walenz B."/>
            <person name="Shatkay H."/>
            <person name="Dew I."/>
            <person name="Miller J.R."/>
            <person name="Flanigan M.J."/>
            <person name="Edwards N.J."/>
            <person name="Bolanos R."/>
            <person name="Fasulo D."/>
            <person name="Halldorsson B.V."/>
            <person name="Hannenhalli S."/>
            <person name="Turner R."/>
            <person name="Yooseph S."/>
            <person name="Lu F."/>
            <person name="Nusskern D.R."/>
            <person name="Shue B.C."/>
            <person name="Zheng X.H."/>
            <person name="Zhong F."/>
            <person name="Delcher A.L."/>
            <person name="Huson D.H."/>
            <person name="Kravitz S.A."/>
            <person name="Mouchard L."/>
            <person name="Reinert K."/>
            <person name="Remington K.A."/>
            <person name="Clark A.G."/>
            <person name="Waterman M.S."/>
            <person name="Eichler E.E."/>
            <person name="Adams M.D."/>
            <person name="Hunkapiller M.W."/>
            <person name="Myers E.W."/>
            <person name="Venter J.C."/>
        </authorList>
    </citation>
    <scope>NUCLEOTIDE SEQUENCE [LARGE SCALE GENOMIC DNA]</scope>
</reference>
<reference key="7">
    <citation type="journal article" date="1986" name="Nucleic Acids Res.">
        <title>A new member of the plasma protease inhibitor gene family.</title>
        <authorList>
            <person name="Ragg H."/>
        </authorList>
    </citation>
    <scope>NUCLEOTIDE SEQUENCE [MRNA] OF 19-499</scope>
</reference>
<reference key="8">
    <citation type="journal article" date="1986" name="Biochem. Biophys. Res. Commun.">
        <title>Isolation and characterization of a partial cDNA clone for heparin cofactor II1.</title>
        <authorList>
            <person name="Inhorn R.C."/>
            <person name="Tollefsen D.M."/>
        </authorList>
    </citation>
    <scope>NUCLEOTIDE SEQUENCE [MRNA] OF 333-499</scope>
</reference>
<reference key="9">
    <citation type="journal article" date="1985" name="Biochemistry">
        <title>Structural evidence for leucine at the reactive site of heparin cofactor II.</title>
        <authorList>
            <person name="Griffith M.J."/>
            <person name="Noyes C.M."/>
            <person name="Tyndall J.A."/>
            <person name="Church F.C."/>
        </authorList>
    </citation>
    <scope>PROTEIN SEQUENCE OF 20-52 AND 464-499</scope>
</reference>
<reference key="10">
    <citation type="journal article" date="1988" name="J. Biol. Chem.">
        <title>Structure and expression of the gene coding for the human serpin hLS2.</title>
        <authorList>
            <person name="Ragg H."/>
            <person name="Preibisch G."/>
        </authorList>
    </citation>
    <scope>NUCLEOTIDE SEQUENCE [GENOMIC DNA] OF 1-119</scope>
</reference>
<reference key="11">
    <citation type="journal article" date="1991" name="J. Biol. Chem.">
        <title>Leukocyte chemoattractant peptides from the serpin heparin cofactor II.</title>
        <authorList>
            <person name="Church F.C."/>
            <person name="Pratt C.W."/>
            <person name="Hoffman M."/>
        </authorList>
    </citation>
    <scope>PROTEIN SEQUENCE OF 58-85</scope>
</reference>
<reference key="12">
    <citation type="journal article" date="1991" name="J. Biol. Chem.">
        <title>The N-terminal acidic domain of heparin cofactor II mediates the inhibition of alpha-thrombin in the presence of glycosaminoglycans.</title>
        <authorList>
            <person name="van Deerlin V.M.D."/>
            <person name="Tollefsen D.M."/>
        </authorList>
    </citation>
    <scope>FUNCTION OF N-TERMINAL ACIDIC DOMAIN</scope>
</reference>
<reference key="13">
    <citation type="journal article" date="1990" name="J. Biol. Chem.">
        <title>Site-directed mutagenesis of arginine 103 and lysine 185 in the proposed glycosaminoglycan-binding site of heparin cofactor II.</title>
        <authorList>
            <person name="Blinder M.A."/>
            <person name="Tollefsen D.M."/>
        </authorList>
    </citation>
    <scope>MUTAGENESIS OF ARG-122 AND LYS-204</scope>
</reference>
<reference key="14">
    <citation type="journal article" date="2005" name="J. Proteome Res.">
        <title>Human plasma N-glycoproteome analysis by immunoaffinity subtraction, hydrazide chemistry, and mass spectrometry.</title>
        <authorList>
            <person name="Liu T."/>
            <person name="Qian W.-J."/>
            <person name="Gritsenko M.A."/>
            <person name="Camp D.G. II"/>
            <person name="Monroe M.E."/>
            <person name="Moore R.J."/>
            <person name="Smith R.D."/>
        </authorList>
    </citation>
    <scope>GLYCOSYLATION [LARGE SCALE ANALYSIS] AT ASN-49 AND ASN-188</scope>
    <source>
        <tissue>Plasma</tissue>
    </source>
</reference>
<reference key="15">
    <citation type="journal article" date="2009" name="J. Proteome Res.">
        <title>Glycoproteomics analysis of human liver tissue by combination of multiple enzyme digestion and hydrazide chemistry.</title>
        <authorList>
            <person name="Chen R."/>
            <person name="Jiang X."/>
            <person name="Sun D."/>
            <person name="Han G."/>
            <person name="Wang F."/>
            <person name="Ye M."/>
            <person name="Wang L."/>
            <person name="Zou H."/>
        </authorList>
    </citation>
    <scope>GLYCOSYLATION [LARGE SCALE ANALYSIS] AT ASN-49 AND ASN-188</scope>
    <source>
        <tissue>Liver</tissue>
    </source>
</reference>
<reference key="16">
    <citation type="journal article" date="2009" name="Mol. Cell. Proteomics">
        <title>A strategy for precise and large scale identification of core fucosylated glycoproteins.</title>
        <authorList>
            <person name="Jia W."/>
            <person name="Lu Z."/>
            <person name="Fu Y."/>
            <person name="Wang H.P."/>
            <person name="Wang L.H."/>
            <person name="Chi H."/>
            <person name="Yuan Z.F."/>
            <person name="Zheng Z.B."/>
            <person name="Song L.N."/>
            <person name="Han H.H."/>
            <person name="Liang Y.M."/>
            <person name="Wang J.L."/>
            <person name="Cai Y."/>
            <person name="Zhang Y.K."/>
            <person name="Deng Y.L."/>
            <person name="Ying W.T."/>
            <person name="He S.M."/>
            <person name="Qian X.H."/>
        </authorList>
    </citation>
    <scope>GLYCOSYLATION AT ASN-49</scope>
</reference>
<reference key="17">
    <citation type="journal article" date="2015" name="Cell">
        <title>A single kinase generates the majority of the secreted phosphoproteome.</title>
        <authorList>
            <person name="Tagliabracci V.S."/>
            <person name="Wiley S.E."/>
            <person name="Guo X."/>
            <person name="Kinch L.N."/>
            <person name="Durrant E."/>
            <person name="Wen J."/>
            <person name="Xiao J."/>
            <person name="Cui J."/>
            <person name="Nguyen K.B."/>
            <person name="Engel J.L."/>
            <person name="Coon J.J."/>
            <person name="Grishin N."/>
            <person name="Pinna L.A."/>
            <person name="Pagliarini D.J."/>
            <person name="Dixon J.E."/>
        </authorList>
    </citation>
    <scope>PHOSPHORYLATION AT SER-37</scope>
</reference>
<reference key="18">
    <citation type="journal article" date="2002" name="Proc. Natl. Acad. Sci. U.S.A.">
        <title>Crystal structures of native and thrombin-complexed heparin cofactor II reveal a multistep allosteric mechanism.</title>
        <authorList>
            <person name="Baglin T.P."/>
            <person name="Carrell R.W."/>
            <person name="Church F.C."/>
            <person name="Esmon C.T."/>
            <person name="Huntington J.A."/>
        </authorList>
    </citation>
    <scope>X-RAY CRYSTALLOGRAPHY (2.2 ANGSTROMS) OF 20-499</scope>
    <scope>GLYCOSYLATION AT ASN-188 AND ASN-387</scope>
    <scope>SULFATION AT TYR-79 AND TYR-92</scope>
</reference>
<reference key="19">
    <citation type="journal article" date="1989" name="J. Biol. Chem.">
        <title>Heparin cofactor IIOslo. Mutation of Arg-189 to His decreases the affinity for dermatan sulfate.</title>
        <authorList>
            <person name="Blinder M.A."/>
            <person name="Andersson T.R."/>
            <person name="Abildgaard U."/>
            <person name="Tollefsen D.M."/>
        </authorList>
    </citation>
    <scope>VARIANT THPH10 HIS-208</scope>
</reference>
<reference key="20">
    <citation type="journal article" date="1999" name="Nat. Genet.">
        <title>Characterization of single-nucleotide polymorphisms in coding regions of human genes.</title>
        <authorList>
            <person name="Cargill M."/>
            <person name="Altshuler D."/>
            <person name="Ireland J."/>
            <person name="Sklar P."/>
            <person name="Ardlie K."/>
            <person name="Patil N."/>
            <person name="Shaw N."/>
            <person name="Lane C.R."/>
            <person name="Lim E.P."/>
            <person name="Kalyanaraman N."/>
            <person name="Nemesh J."/>
            <person name="Ziaugra L."/>
            <person name="Friedland L."/>
            <person name="Rolfe A."/>
            <person name="Warrington J."/>
            <person name="Lipshutz R."/>
            <person name="Daley G.Q."/>
            <person name="Lander E.S."/>
        </authorList>
    </citation>
    <scope>VARIANT THPH10 HIS-208</scope>
    <scope>VARIANTS THR-7 AND MET-442</scope>
</reference>
<reference key="21">
    <citation type="journal article" date="1999" name="Nat. Genet.">
        <authorList>
            <person name="Cargill M."/>
            <person name="Altshuler D."/>
            <person name="Ireland J."/>
            <person name="Sklar P."/>
            <person name="Ardlie K."/>
            <person name="Patil N."/>
            <person name="Shaw N."/>
            <person name="Lane C.R."/>
            <person name="Lim E.P."/>
            <person name="Kalyanaraman N."/>
            <person name="Nemesh J."/>
            <person name="Ziaugra L."/>
            <person name="Friedland L."/>
            <person name="Rolfe A."/>
            <person name="Warrington J."/>
            <person name="Lipshutz R."/>
            <person name="Daley G.Q."/>
            <person name="Lander E.S."/>
        </authorList>
    </citation>
    <scope>ERRATUM OF PUBMED:10391209</scope>
</reference>
<reference key="22">
    <citation type="journal article" date="2001" name="Thromb. Haemost.">
        <title>Molecular mechanism of type I congenital heparin cofactor (HC) II deficiency caused by a missense mutation at reactive P2 site: HC II Tokushima.</title>
        <authorList>
            <person name="Kanagawa Y."/>
            <person name="Shigekiyo T."/>
            <person name="Aihara K."/>
            <person name="Akaike M."/>
            <person name="Azuma H."/>
            <person name="Matsumoto T."/>
        </authorList>
    </citation>
    <scope>VARIANT THPH10 LEU-462</scope>
    <scope>CHARACTERIZATION OF VARIANT THPH10 LEU-462</scope>
</reference>
<reference key="23">
    <citation type="journal article" date="2004" name="Circulation">
        <title>Homozygous deficiency of heparin cofactor II: relevance of P17 glutamate residue in serpins, relationship with conformational diseases, and role in thrombosis.</title>
        <authorList>
            <person name="Corral J."/>
            <person name="Aznar J."/>
            <person name="Gonzalez-Conejero R."/>
            <person name="Villa P."/>
            <person name="Minano A."/>
            <person name="Vaya A."/>
            <person name="Carrell R.W."/>
            <person name="Huntington J.A."/>
            <person name="Vicente V."/>
        </authorList>
    </citation>
    <scope>VARIANT THPH10 LYS-447</scope>
</reference>
<protein>
    <recommendedName>
        <fullName>Heparin cofactor 2</fullName>
    </recommendedName>
    <alternativeName>
        <fullName>Heparin cofactor II</fullName>
        <shortName>HC-II</shortName>
    </alternativeName>
    <alternativeName>
        <fullName>Protease inhibitor leuserpin-2</fullName>
        <shortName>HLS2</shortName>
    </alternativeName>
    <alternativeName>
        <fullName>Serpin D1</fullName>
    </alternativeName>
</protein>
<keyword id="KW-0002">3D-structure</keyword>
<keyword id="KW-0025">Alternative splicing</keyword>
<keyword id="KW-0094">Blood coagulation</keyword>
<keyword id="KW-0145">Chemotaxis</keyword>
<keyword id="KW-0903">Direct protein sequencing</keyword>
<keyword id="KW-0225">Disease variant</keyword>
<keyword id="KW-0325">Glycoprotein</keyword>
<keyword id="KW-0356">Hemostasis</keyword>
<keyword id="KW-0358">Heparin-binding</keyword>
<keyword id="KW-0597">Phosphoprotein</keyword>
<keyword id="KW-0646">Protease inhibitor</keyword>
<keyword id="KW-1267">Proteomics identification</keyword>
<keyword id="KW-1185">Reference proteome</keyword>
<keyword id="KW-0677">Repeat</keyword>
<keyword id="KW-0722">Serine protease inhibitor</keyword>
<keyword id="KW-0732">Signal</keyword>
<keyword id="KW-0765">Sulfation</keyword>
<keyword id="KW-0792">Thrombophilia</keyword>
<feature type="signal peptide" evidence="14">
    <location>
        <begin position="1"/>
        <end position="19"/>
    </location>
</feature>
<feature type="chain" id="PRO_0000032494" description="Heparin cofactor 2">
    <location>
        <begin position="20"/>
        <end position="499"/>
    </location>
</feature>
<feature type="repeat" description="1">
    <location>
        <begin position="73"/>
        <end position="83"/>
    </location>
</feature>
<feature type="repeat" description="2">
    <location>
        <begin position="87"/>
        <end position="97"/>
    </location>
</feature>
<feature type="region of interest" description="Chemotactic activity">
    <location>
        <begin position="68"/>
        <end position="79"/>
    </location>
</feature>
<feature type="region of interest" description="2 X 11 AA approximate repeats, Asp/Glu-rich (acidic) (hirudin-like)">
    <location>
        <begin position="73"/>
        <end position="97"/>
    </location>
</feature>
<feature type="region of interest" description="Glycosaminoglycan-binding site">
    <location>
        <begin position="192"/>
        <end position="212"/>
    </location>
</feature>
<feature type="site" description="Reactive bond" evidence="1">
    <location>
        <begin position="463"/>
        <end position="464"/>
    </location>
</feature>
<feature type="modified residue" description="Phosphoserine; by FAM20C" evidence="11">
    <location>
        <position position="37"/>
    </location>
</feature>
<feature type="modified residue" description="Sulfotyrosine" evidence="4">
    <location>
        <position position="79"/>
    </location>
</feature>
<feature type="modified residue" description="Sulfotyrosine" evidence="4">
    <location>
        <position position="92"/>
    </location>
</feature>
<feature type="glycosylation site" description="N-linked (GlcNAc...) (complex) asparagine" evidence="6 7 8">
    <location>
        <position position="49"/>
    </location>
</feature>
<feature type="glycosylation site" description="N-linked (GlcNAc...) asparagine" evidence="4 6 8">
    <location>
        <position position="188"/>
    </location>
</feature>
<feature type="glycosylation site" description="N-linked (GlcNAc...) asparagine" evidence="4">
    <location>
        <position position="387"/>
    </location>
</feature>
<feature type="splice variant" id="VSP_062394" description="In isoform 2." evidence="13">
    <original>FKHQGTITVNEEGTQATTVTTVGFMPLSTQVRFTVDRPFLFLIYEHRTSCL</original>
    <variation>VTTPLSTPDPSPGSASAQPHLHLPFLPTPQSHVPAWGAESALRPGWDTQNA</variation>
    <location>
        <begin position="437"/>
        <end position="487"/>
    </location>
</feature>
<feature type="splice variant" id="VSP_062395" description="In isoform 2." evidence="13">
    <location>
        <begin position="488"/>
        <end position="499"/>
    </location>
</feature>
<feature type="sequence variant" id="VAR_011746" description="In dbSNP:rs5905." evidence="2">
    <original>A</original>
    <variation>T</variation>
    <location>
        <position position="7"/>
    </location>
</feature>
<feature type="sequence variant" id="VAR_011747" description="In dbSNP:rs165867.">
    <original>H</original>
    <variation>P</variation>
    <location>
        <position position="60"/>
    </location>
</feature>
<feature type="sequence variant" id="VAR_051953" description="In dbSNP:rs34324685.">
    <original>S</original>
    <variation>N</variation>
    <location>
        <position position="87"/>
    </location>
</feature>
<feature type="sequence variant" id="VAR_051954" description="In dbSNP:rs11542069.">
    <original>L</original>
    <variation>V</variation>
    <location>
        <position position="129"/>
    </location>
</feature>
<feature type="sequence variant" id="VAR_007112" description="In THPH10; Oslo; decreased affinity for dermatan sulfate; dbSNP:rs5907." evidence="2 12">
    <original>R</original>
    <variation>H</variation>
    <location>
        <position position="208"/>
    </location>
</feature>
<feature type="sequence variant" id="VAR_011748" description="In dbSNP:rs1042435.">
    <original>K</original>
    <variation>R</variation>
    <location>
        <position position="237"/>
    </location>
</feature>
<feature type="sequence variant" id="VAR_011749" description="In dbSNP:rs5904." evidence="2">
    <original>T</original>
    <variation>M</variation>
    <location>
        <position position="442"/>
    </location>
</feature>
<feature type="sequence variant" id="VAR_054977" description="In THPH10; dbSNP:rs142451096." evidence="5">
    <original>E</original>
    <variation>K</variation>
    <location>
        <position position="447"/>
    </location>
</feature>
<feature type="sequence variant" id="VAR_054978" description="In THPH10; Tokushima; impaired secretion of the mutant molecules; dbSNP:rs121912420." evidence="3">
    <original>P</original>
    <variation>L</variation>
    <location>
        <position position="462"/>
    </location>
</feature>
<feature type="mutagenesis site" description="Normal thrombin inhibition and glycosaminoglycan affinity." evidence="10">
    <original>R</original>
    <variation>L</variation>
    <location>
        <position position="122"/>
    </location>
</feature>
<feature type="mutagenesis site" description="Greatly reduced thrombin inhibition. Normal glycosaminoglycan affinity." evidence="10">
    <original>R</original>
    <variation>Q</variation>
    <location>
        <position position="122"/>
    </location>
</feature>
<feature type="mutagenesis site" description="Greatly reduced thrombin inhibition. Normal glycosaminoglycan affinity." evidence="10">
    <original>R</original>
    <variation>W</variation>
    <location>
        <position position="122"/>
    </location>
</feature>
<feature type="mutagenesis site" description="Reduced heparin- and no dermatan sulfate-activated inhibition." evidence="10">
    <original>K</original>
    <variation>M</variation>
    <location>
        <position position="204"/>
    </location>
</feature>
<feature type="mutagenesis site" description="Reduced heparin- and no dermatan sulfate-activated inhibition." evidence="10">
    <original>K</original>
    <variation>N</variation>
    <location>
        <position position="204"/>
    </location>
</feature>
<feature type="mutagenesis site" description="Reduced heparin- and no dermatan sulfate-activated inhibition." evidence="10">
    <original>K</original>
    <variation>T</variation>
    <location>
        <position position="204"/>
    </location>
</feature>
<feature type="sequence conflict" description="In Ref. 9; AA sequence." evidence="16" ref="9">
    <location>
        <position position="49"/>
    </location>
</feature>
<feature type="sequence conflict" description="In Ref. 9; AA sequence." evidence="16" ref="9">
    <original>R</original>
    <variation>P</variation>
    <location>
        <position position="483"/>
    </location>
</feature>
<feature type="sequence conflict" description="In Ref. 9; AA sequence." evidence="16" ref="9">
    <original>C</original>
    <variation>T</variation>
    <location>
        <position position="486"/>
    </location>
</feature>
<feature type="sequence conflict" description="In Ref. 9; AA sequence." evidence="16" ref="9">
    <original>S</original>
    <variation>Q</variation>
    <location>
        <position position="499"/>
    </location>
</feature>
<feature type="helix" evidence="18">
    <location>
        <begin position="82"/>
        <end position="87"/>
    </location>
</feature>
<feature type="helix" evidence="18">
    <location>
        <begin position="90"/>
        <end position="92"/>
    </location>
</feature>
<feature type="helix" evidence="18">
    <location>
        <begin position="122"/>
        <end position="142"/>
    </location>
</feature>
<feature type="strand" evidence="18">
    <location>
        <begin position="151"/>
        <end position="153"/>
    </location>
</feature>
<feature type="helix" evidence="18">
    <location>
        <begin position="155"/>
        <end position="165"/>
    </location>
</feature>
<feature type="helix" evidence="18">
    <location>
        <begin position="166"/>
        <end position="168"/>
    </location>
</feature>
<feature type="helix" evidence="18">
    <location>
        <begin position="171"/>
        <end position="180"/>
    </location>
</feature>
<feature type="helix" evidence="18">
    <location>
        <begin position="183"/>
        <end position="189"/>
    </location>
</feature>
<feature type="helix" evidence="19">
    <location>
        <begin position="191"/>
        <end position="194"/>
    </location>
</feature>
<feature type="helix" evidence="18">
    <location>
        <begin position="195"/>
        <end position="210"/>
    </location>
</feature>
<feature type="strand" evidence="18">
    <location>
        <begin position="214"/>
        <end position="227"/>
    </location>
</feature>
<feature type="helix" evidence="18">
    <location>
        <begin position="234"/>
        <end position="244"/>
    </location>
</feature>
<feature type="strand" evidence="18">
    <location>
        <begin position="248"/>
        <end position="251"/>
    </location>
</feature>
<feature type="helix" evidence="18">
    <location>
        <begin position="256"/>
        <end position="269"/>
    </location>
</feature>
<feature type="turn" evidence="18">
    <location>
        <begin position="270"/>
        <end position="272"/>
    </location>
</feature>
<feature type="turn" evidence="17">
    <location>
        <begin position="277"/>
        <end position="280"/>
    </location>
</feature>
<feature type="strand" evidence="18">
    <location>
        <begin position="287"/>
        <end position="296"/>
    </location>
</feature>
<feature type="strand" evidence="18">
    <location>
        <begin position="299"/>
        <end position="301"/>
    </location>
</feature>
<feature type="helix" evidence="18">
    <location>
        <begin position="305"/>
        <end position="307"/>
    </location>
</feature>
<feature type="strand" evidence="18">
    <location>
        <begin position="309"/>
        <end position="314"/>
    </location>
</feature>
<feature type="strand" evidence="18">
    <location>
        <begin position="316"/>
        <end position="318"/>
    </location>
</feature>
<feature type="strand" evidence="18">
    <location>
        <begin position="320"/>
        <end position="337"/>
    </location>
</feature>
<feature type="turn" evidence="18">
    <location>
        <begin position="338"/>
        <end position="341"/>
    </location>
</feature>
<feature type="strand" evidence="18">
    <location>
        <begin position="342"/>
        <end position="349"/>
    </location>
</feature>
<feature type="turn" evidence="18">
    <location>
        <begin position="350"/>
        <end position="352"/>
    </location>
</feature>
<feature type="strand" evidence="18">
    <location>
        <begin position="353"/>
        <end position="362"/>
    </location>
</feature>
<feature type="helix" evidence="18">
    <location>
        <begin position="363"/>
        <end position="365"/>
    </location>
</feature>
<feature type="helix" evidence="18">
    <location>
        <begin position="366"/>
        <end position="372"/>
    </location>
</feature>
<feature type="helix" evidence="18">
    <location>
        <begin position="375"/>
        <end position="384"/>
    </location>
</feature>
<feature type="strand" evidence="18">
    <location>
        <begin position="386"/>
        <end position="395"/>
    </location>
</feature>
<feature type="strand" evidence="18">
    <location>
        <begin position="397"/>
        <end position="400"/>
    </location>
</feature>
<feature type="helix" evidence="18">
    <location>
        <begin position="406"/>
        <end position="412"/>
    </location>
</feature>
<feature type="helix" evidence="18">
    <location>
        <begin position="416"/>
        <end position="418"/>
    </location>
</feature>
<feature type="turn" evidence="18">
    <location>
        <begin position="425"/>
        <end position="427"/>
    </location>
</feature>
<feature type="strand" evidence="18">
    <location>
        <begin position="434"/>
        <end position="445"/>
    </location>
</feature>
<feature type="strand" evidence="17">
    <location>
        <begin position="447"/>
        <end position="451"/>
    </location>
</feature>
<feature type="strand" evidence="18">
    <location>
        <begin position="459"/>
        <end position="462"/>
    </location>
</feature>
<feature type="strand" evidence="18">
    <location>
        <begin position="468"/>
        <end position="470"/>
    </location>
</feature>
<feature type="strand" evidence="18">
    <location>
        <begin position="475"/>
        <end position="481"/>
    </location>
</feature>
<feature type="turn" evidence="18">
    <location>
        <begin position="482"/>
        <end position="485"/>
    </location>
</feature>
<feature type="strand" evidence="18">
    <location>
        <begin position="486"/>
        <end position="494"/>
    </location>
</feature>
<sequence length="499" mass="57071">MKHSLNALLIFLIITSAWGGSKGPLDQLEKGGETAQSADPQWEQLNNKNLSMPLLPADFHKENTVTNDWIPEGEEDDDYLDLEKIFSEDDDYIDIVDSLSVSPTDSDVSAGNILQLFHGKSRIQRLNILNAKFAFNLYRVLKDQVNTFDNIFIAPVGISTAMGMISLGLKGETHEQVHSILHFKDFVNASSKYEITTIHNLFRKLTHRLFRRNFGYTLRSVNDLYIQKQFPILLDFKTKVREYYFAEAQIADFSDPAFISKTNNHIMKLTKGLIKDALENIDPATQMMILNCIYFKGSWVNKFPVEMTHNHNFRLNEREVVKVSMMQTKGNFLAANDQELDCDILQLEYVGGISMLIVVPHKMSGMKTLEAQLTPRVVERWQKSMTNRTREVLLPKFKLEKNYNLVESLKLMGIRMLFDKNGNMAGISDQRIAIDLFKHQGTITVNEEGTQATTVTTVGFMPLSTQVRFTVDRPFLFLIYEHRTSCLLFMGRVANPSRS</sequence>
<gene>
    <name type="primary">SERPIND1</name>
    <name type="synonym">HCF2</name>
</gene>
<comment type="function">
    <text evidence="9 13">Thrombin inhibitor activated by the glycosaminoglycans, heparin or dermatan sulfate. In the presence of the latter, HC-II becomes the predominant thrombin inhibitor in place of antithrombin III (AT-III). Also inhibits chymotrypsin, but in a glycosaminoglycan-independent manner.</text>
</comment>
<comment type="function">
    <text evidence="9">Peptides at the N-terminal of HC-II have chemotactic activity for both monocytes and neutrophils.</text>
</comment>
<comment type="function">
    <molecule>Isoform 2</molecule>
    <text evidence="13">Shows negligible inhibition, in vitro, of thrombin and tPA and no inhibition of factor Xa, in vitro.</text>
</comment>
<comment type="interaction">
    <interactant intactId="EBI-1221005">
        <id>P05546</id>
    </interactant>
    <interactant intactId="EBI-10234766">
        <id>Q9HCJ6</id>
        <label>VAT1L</label>
    </interactant>
    <organismsDiffer>false</organismsDiffer>
    <experiments>2</experiments>
</comment>
<comment type="alternative products">
    <event type="alternative splicing"/>
    <isoform>
        <id>P05546-1</id>
        <name>1</name>
        <name evidence="15">HCII</name>
        <sequence type="displayed"/>
    </isoform>
    <isoform>
        <id>P05546-2</id>
        <name>2</name>
        <name evidence="15">HCII-N</name>
        <sequence type="described" ref="VSP_062394 VSP_062395"/>
    </isoform>
</comment>
<comment type="tissue specificity">
    <text evidence="13">Expressed predominantly in liver. Also present in plasma.</text>
</comment>
<comment type="tissue specificity">
    <molecule>Isoform 2</molecule>
    <text evidence="13">Expressed in plasma (at protein level) (PubMed:32827448). Expressed in liver (PubMed:32827448).</text>
</comment>
<comment type="domain">
    <text>The N-terminal acidic repeat region mediates, in part, the glycosaminoglycan-accelerated thrombin inhibition.</text>
</comment>
<comment type="PTM">
    <text evidence="11">Phosphorylated by FAM20C in the extracellular medium.</text>
</comment>
<comment type="disease" evidence="2 3 5 12">
    <disease id="DI-00541">
        <name>Thrombophilia due to heparin cofactor 2 deficiency</name>
        <acronym>THPH10</acronym>
        <description>A hemostatic disorder characterized by a tendency to recurrent thrombosis.</description>
        <dbReference type="MIM" id="612356"/>
    </disease>
    <text>The disease is caused by variants affecting the gene represented in this entry.</text>
</comment>
<comment type="miscellaneous">
    <molecule>Isoform 2</molecule>
    <text evidence="13">Produced by alternative exon usage of exon 3b instead of exon 4.</text>
</comment>
<comment type="similarity">
    <text evidence="16">Belongs to the serpin family.</text>
</comment>
<comment type="sequence caution" evidence="16">
    <conflict type="erroneous initiation">
        <sequence resource="EMBL-CDS" id="CAG30459"/>
    </conflict>
    <text>Extended N-terminus.</text>
</comment>